<dbReference type="EMBL" id="CT971583">
    <property type="protein sequence ID" value="CAK24427.1"/>
    <property type="molecule type" value="Genomic_DNA"/>
</dbReference>
<dbReference type="SMR" id="A5GNB2"/>
<dbReference type="STRING" id="32051.SynWH7803_2001"/>
<dbReference type="KEGG" id="syx:SynWH7803_2001"/>
<dbReference type="eggNOG" id="COG0355">
    <property type="taxonomic scope" value="Bacteria"/>
</dbReference>
<dbReference type="HOGENOM" id="CLU_084338_1_2_3"/>
<dbReference type="OrthoDB" id="9804110at2"/>
<dbReference type="Proteomes" id="UP000001566">
    <property type="component" value="Chromosome"/>
</dbReference>
<dbReference type="GO" id="GO:0031676">
    <property type="term" value="C:plasma membrane-derived thylakoid membrane"/>
    <property type="evidence" value="ECO:0007669"/>
    <property type="project" value="UniProtKB-SubCell"/>
</dbReference>
<dbReference type="GO" id="GO:0045259">
    <property type="term" value="C:proton-transporting ATP synthase complex"/>
    <property type="evidence" value="ECO:0007669"/>
    <property type="project" value="UniProtKB-KW"/>
</dbReference>
<dbReference type="GO" id="GO:0005524">
    <property type="term" value="F:ATP binding"/>
    <property type="evidence" value="ECO:0007669"/>
    <property type="project" value="UniProtKB-UniRule"/>
</dbReference>
<dbReference type="GO" id="GO:0046933">
    <property type="term" value="F:proton-transporting ATP synthase activity, rotational mechanism"/>
    <property type="evidence" value="ECO:0007669"/>
    <property type="project" value="UniProtKB-UniRule"/>
</dbReference>
<dbReference type="CDD" id="cd12152">
    <property type="entry name" value="F1-ATPase_delta"/>
    <property type="match status" value="1"/>
</dbReference>
<dbReference type="Gene3D" id="2.60.15.10">
    <property type="entry name" value="F0F1 ATP synthase delta/epsilon subunit, N-terminal"/>
    <property type="match status" value="1"/>
</dbReference>
<dbReference type="Gene3D" id="1.10.287.540">
    <property type="entry name" value="Helix hairpin bin"/>
    <property type="match status" value="1"/>
</dbReference>
<dbReference type="HAMAP" id="MF_00530">
    <property type="entry name" value="ATP_synth_epsil_bac"/>
    <property type="match status" value="1"/>
</dbReference>
<dbReference type="InterPro" id="IPR001469">
    <property type="entry name" value="ATP_synth_F1_dsu/esu"/>
</dbReference>
<dbReference type="InterPro" id="IPR020546">
    <property type="entry name" value="ATP_synth_F1_dsu/esu_N"/>
</dbReference>
<dbReference type="InterPro" id="IPR020547">
    <property type="entry name" value="ATP_synth_F1_esu_C"/>
</dbReference>
<dbReference type="InterPro" id="IPR036771">
    <property type="entry name" value="ATPsynth_dsu/esu_N"/>
</dbReference>
<dbReference type="NCBIfam" id="TIGR01216">
    <property type="entry name" value="ATP_synt_epsi"/>
    <property type="match status" value="1"/>
</dbReference>
<dbReference type="PANTHER" id="PTHR13822">
    <property type="entry name" value="ATP SYNTHASE DELTA/EPSILON CHAIN"/>
    <property type="match status" value="1"/>
</dbReference>
<dbReference type="PANTHER" id="PTHR13822:SF10">
    <property type="entry name" value="ATP SYNTHASE EPSILON CHAIN, CHLOROPLASTIC"/>
    <property type="match status" value="1"/>
</dbReference>
<dbReference type="Pfam" id="PF00401">
    <property type="entry name" value="ATP-synt_DE"/>
    <property type="match status" value="1"/>
</dbReference>
<dbReference type="Pfam" id="PF02823">
    <property type="entry name" value="ATP-synt_DE_N"/>
    <property type="match status" value="1"/>
</dbReference>
<dbReference type="SUPFAM" id="SSF51344">
    <property type="entry name" value="Epsilon subunit of F1F0-ATP synthase N-terminal domain"/>
    <property type="match status" value="1"/>
</dbReference>
<accession>A5GNB2</accession>
<proteinExistence type="inferred from homology"/>
<sequence>MSLTLRVLAPDQSVFDGSADEVILPSTTGQLGILPGHVSLLAALDVGVLRVRADGGWKSIALMGGFAEVDADDVTVLVNSAELGSSIDASSAESDLQAARNEVSKMEGQPASADKVKAQQSLDRARARVQAAKNQD</sequence>
<name>ATPE_SYNPW</name>
<feature type="chain" id="PRO_1000056546" description="ATP synthase epsilon chain">
    <location>
        <begin position="1"/>
        <end position="136"/>
    </location>
</feature>
<feature type="region of interest" description="Disordered" evidence="2">
    <location>
        <begin position="88"/>
        <end position="136"/>
    </location>
</feature>
<protein>
    <recommendedName>
        <fullName evidence="1">ATP synthase epsilon chain</fullName>
    </recommendedName>
    <alternativeName>
        <fullName evidence="1">ATP synthase F1 sector epsilon subunit</fullName>
    </alternativeName>
    <alternativeName>
        <fullName evidence="1">F-ATPase epsilon subunit</fullName>
    </alternativeName>
</protein>
<comment type="function">
    <text evidence="1">Produces ATP from ADP in the presence of a proton gradient across the membrane.</text>
</comment>
<comment type="subunit">
    <text evidence="1">F-type ATPases have 2 components, CF(1) - the catalytic core - and CF(0) - the membrane proton channel. CF(1) has five subunits: alpha(3), beta(3), gamma(1), delta(1), epsilon(1). CF(0) has three main subunits: a, b and c.</text>
</comment>
<comment type="subcellular location">
    <subcellularLocation>
        <location evidence="1">Cellular thylakoid membrane</location>
        <topology evidence="1">Peripheral membrane protein</topology>
    </subcellularLocation>
</comment>
<comment type="similarity">
    <text evidence="1">Belongs to the ATPase epsilon chain family.</text>
</comment>
<reference key="1">
    <citation type="submission" date="2006-05" db="EMBL/GenBank/DDBJ databases">
        <authorList>
            <consortium name="Genoscope"/>
        </authorList>
    </citation>
    <scope>NUCLEOTIDE SEQUENCE [LARGE SCALE GENOMIC DNA]</scope>
    <source>
        <strain>WH7803</strain>
    </source>
</reference>
<evidence type="ECO:0000255" key="1">
    <source>
        <dbReference type="HAMAP-Rule" id="MF_00530"/>
    </source>
</evidence>
<evidence type="ECO:0000256" key="2">
    <source>
        <dbReference type="SAM" id="MobiDB-lite"/>
    </source>
</evidence>
<gene>
    <name evidence="1" type="primary">atpC</name>
    <name type="ordered locus">SynWH7803_2001</name>
</gene>
<keyword id="KW-0066">ATP synthesis</keyword>
<keyword id="KW-0139">CF(1)</keyword>
<keyword id="KW-0375">Hydrogen ion transport</keyword>
<keyword id="KW-0406">Ion transport</keyword>
<keyword id="KW-0472">Membrane</keyword>
<keyword id="KW-1185">Reference proteome</keyword>
<keyword id="KW-0793">Thylakoid</keyword>
<keyword id="KW-0813">Transport</keyword>
<organism>
    <name type="scientific">Synechococcus sp. (strain WH7803)</name>
    <dbReference type="NCBI Taxonomy" id="32051"/>
    <lineage>
        <taxon>Bacteria</taxon>
        <taxon>Bacillati</taxon>
        <taxon>Cyanobacteriota</taxon>
        <taxon>Cyanophyceae</taxon>
        <taxon>Synechococcales</taxon>
        <taxon>Synechococcaceae</taxon>
        <taxon>Synechococcus</taxon>
    </lineage>
</organism>